<organism>
    <name type="scientific">Bifidobacterium longum (strain DJO10A)</name>
    <dbReference type="NCBI Taxonomy" id="205913"/>
    <lineage>
        <taxon>Bacteria</taxon>
        <taxon>Bacillati</taxon>
        <taxon>Actinomycetota</taxon>
        <taxon>Actinomycetes</taxon>
        <taxon>Bifidobacteriales</taxon>
        <taxon>Bifidobacteriaceae</taxon>
        <taxon>Bifidobacterium</taxon>
    </lineage>
</organism>
<proteinExistence type="inferred from homology"/>
<protein>
    <recommendedName>
        <fullName evidence="1">Large ribosomal subunit protein bL31</fullName>
    </recommendedName>
    <alternativeName>
        <fullName evidence="2">50S ribosomal protein L31</fullName>
    </alternativeName>
</protein>
<feature type="chain" id="PRO_1000126569" description="Large ribosomal subunit protein bL31">
    <location>
        <begin position="1"/>
        <end position="70"/>
    </location>
</feature>
<feature type="binding site" evidence="1">
    <location>
        <position position="16"/>
    </location>
    <ligand>
        <name>Zn(2+)</name>
        <dbReference type="ChEBI" id="CHEBI:29105"/>
    </ligand>
</feature>
<feature type="binding site" evidence="1">
    <location>
        <position position="18"/>
    </location>
    <ligand>
        <name>Zn(2+)</name>
        <dbReference type="ChEBI" id="CHEBI:29105"/>
    </ligand>
</feature>
<feature type="binding site" evidence="1">
    <location>
        <position position="38"/>
    </location>
    <ligand>
        <name>Zn(2+)</name>
        <dbReference type="ChEBI" id="CHEBI:29105"/>
    </ligand>
</feature>
<feature type="binding site" evidence="1">
    <location>
        <position position="41"/>
    </location>
    <ligand>
        <name>Zn(2+)</name>
        <dbReference type="ChEBI" id="CHEBI:29105"/>
    </ligand>
</feature>
<gene>
    <name evidence="1" type="primary">rpmE</name>
    <name type="ordered locus">BLD_1888</name>
</gene>
<reference key="1">
    <citation type="journal article" date="2008" name="BMC Genomics">
        <title>Comparative genomic analysis of the gut bacterium Bifidobacterium longum reveals loci susceptible to deletion during pure culture growth.</title>
        <authorList>
            <person name="Lee J.H."/>
            <person name="Karamychev V.N."/>
            <person name="Kozyavkin S.A."/>
            <person name="Mills D."/>
            <person name="Pavlov A.R."/>
            <person name="Pavlova N.V."/>
            <person name="Polouchine N.N."/>
            <person name="Richardson P.M."/>
            <person name="Shakhova V.V."/>
            <person name="Slesarev A.I."/>
            <person name="Weimer B."/>
            <person name="O'Sullivan D.J."/>
        </authorList>
    </citation>
    <scope>NUCLEOTIDE SEQUENCE [LARGE SCALE GENOMIC DNA]</scope>
    <source>
        <strain>DJO10A</strain>
    </source>
</reference>
<keyword id="KW-0479">Metal-binding</keyword>
<keyword id="KW-0687">Ribonucleoprotein</keyword>
<keyword id="KW-0689">Ribosomal protein</keyword>
<keyword id="KW-0694">RNA-binding</keyword>
<keyword id="KW-0699">rRNA-binding</keyword>
<keyword id="KW-0862">Zinc</keyword>
<dbReference type="EMBL" id="CP000605">
    <property type="protein sequence ID" value="ACD99333.1"/>
    <property type="molecule type" value="Genomic_DNA"/>
</dbReference>
<dbReference type="RefSeq" id="WP_003830110.1">
    <property type="nucleotide sequence ID" value="NZ_AABM02000004.1"/>
</dbReference>
<dbReference type="SMR" id="B3DR50"/>
<dbReference type="GeneID" id="69578766"/>
<dbReference type="KEGG" id="blj:BLD_1888"/>
<dbReference type="HOGENOM" id="CLU_114306_4_3_11"/>
<dbReference type="Proteomes" id="UP000002419">
    <property type="component" value="Chromosome"/>
</dbReference>
<dbReference type="GO" id="GO:1990904">
    <property type="term" value="C:ribonucleoprotein complex"/>
    <property type="evidence" value="ECO:0007669"/>
    <property type="project" value="UniProtKB-KW"/>
</dbReference>
<dbReference type="GO" id="GO:0005840">
    <property type="term" value="C:ribosome"/>
    <property type="evidence" value="ECO:0007669"/>
    <property type="project" value="UniProtKB-KW"/>
</dbReference>
<dbReference type="GO" id="GO:0046872">
    <property type="term" value="F:metal ion binding"/>
    <property type="evidence" value="ECO:0007669"/>
    <property type="project" value="UniProtKB-KW"/>
</dbReference>
<dbReference type="GO" id="GO:0019843">
    <property type="term" value="F:rRNA binding"/>
    <property type="evidence" value="ECO:0007669"/>
    <property type="project" value="UniProtKB-KW"/>
</dbReference>
<dbReference type="GO" id="GO:0003735">
    <property type="term" value="F:structural constituent of ribosome"/>
    <property type="evidence" value="ECO:0007669"/>
    <property type="project" value="InterPro"/>
</dbReference>
<dbReference type="GO" id="GO:0006412">
    <property type="term" value="P:translation"/>
    <property type="evidence" value="ECO:0007669"/>
    <property type="project" value="UniProtKB-UniRule"/>
</dbReference>
<dbReference type="Gene3D" id="4.10.830.30">
    <property type="entry name" value="Ribosomal protein L31"/>
    <property type="match status" value="1"/>
</dbReference>
<dbReference type="HAMAP" id="MF_00501">
    <property type="entry name" value="Ribosomal_bL31_1"/>
    <property type="match status" value="1"/>
</dbReference>
<dbReference type="InterPro" id="IPR034704">
    <property type="entry name" value="Ribosomal_bL28/bL31-like_sf"/>
</dbReference>
<dbReference type="InterPro" id="IPR002150">
    <property type="entry name" value="Ribosomal_bL31"/>
</dbReference>
<dbReference type="InterPro" id="IPR027491">
    <property type="entry name" value="Ribosomal_bL31_A"/>
</dbReference>
<dbReference type="InterPro" id="IPR042105">
    <property type="entry name" value="Ribosomal_bL31_sf"/>
</dbReference>
<dbReference type="NCBIfam" id="TIGR00105">
    <property type="entry name" value="L31"/>
    <property type="match status" value="1"/>
</dbReference>
<dbReference type="NCBIfam" id="NF000612">
    <property type="entry name" value="PRK00019.1"/>
    <property type="match status" value="1"/>
</dbReference>
<dbReference type="NCBIfam" id="NF001809">
    <property type="entry name" value="PRK00528.1"/>
    <property type="match status" value="1"/>
</dbReference>
<dbReference type="PANTHER" id="PTHR33280">
    <property type="entry name" value="50S RIBOSOMAL PROTEIN L31, CHLOROPLASTIC"/>
    <property type="match status" value="1"/>
</dbReference>
<dbReference type="PANTHER" id="PTHR33280:SF1">
    <property type="entry name" value="LARGE RIBOSOMAL SUBUNIT PROTEIN BL31C"/>
    <property type="match status" value="1"/>
</dbReference>
<dbReference type="Pfam" id="PF01197">
    <property type="entry name" value="Ribosomal_L31"/>
    <property type="match status" value="1"/>
</dbReference>
<dbReference type="PRINTS" id="PR01249">
    <property type="entry name" value="RIBOSOMALL31"/>
</dbReference>
<dbReference type="SUPFAM" id="SSF143800">
    <property type="entry name" value="L28p-like"/>
    <property type="match status" value="1"/>
</dbReference>
<dbReference type="PROSITE" id="PS01143">
    <property type="entry name" value="RIBOSOMAL_L31"/>
    <property type="match status" value="1"/>
</dbReference>
<name>RL31_BIFLD</name>
<evidence type="ECO:0000255" key="1">
    <source>
        <dbReference type="HAMAP-Rule" id="MF_00501"/>
    </source>
</evidence>
<evidence type="ECO:0000305" key="2"/>
<comment type="function">
    <text evidence="1">Binds the 23S rRNA.</text>
</comment>
<comment type="cofactor">
    <cofactor evidence="1">
        <name>Zn(2+)</name>
        <dbReference type="ChEBI" id="CHEBI:29105"/>
    </cofactor>
    <text evidence="1">Binds 1 zinc ion per subunit.</text>
</comment>
<comment type="subunit">
    <text evidence="1">Part of the 50S ribosomal subunit.</text>
</comment>
<comment type="similarity">
    <text evidence="1">Belongs to the bacterial ribosomal protein bL31 family. Type A subfamily.</text>
</comment>
<sequence length="70" mass="7951">MQQGIHPDYHPVEVTCSCGNTFVTRTAGKEDHMFVDVCSQCHPFYTGKQKILDTGGRVARFEKRYGKKSK</sequence>
<accession>B3DR50</accession>